<feature type="chain" id="PRO_0000263193" description="Aspartate/glutamate leucyltransferase">
    <location>
        <begin position="1"/>
        <end position="248"/>
    </location>
</feature>
<name>BPT_METFK</name>
<gene>
    <name evidence="1" type="primary">bpt1</name>
    <name type="ordered locus">Mfla_0931</name>
</gene>
<gene>
    <name evidence="1" type="primary">bpt2</name>
    <name type="ordered locus">Mfla_1075</name>
</gene>
<protein>
    <recommendedName>
        <fullName evidence="1">Aspartate/glutamate leucyltransferase</fullName>
        <ecNumber evidence="1">2.3.2.29</ecNumber>
    </recommendedName>
</protein>
<evidence type="ECO:0000255" key="1">
    <source>
        <dbReference type="HAMAP-Rule" id="MF_00689"/>
    </source>
</evidence>
<proteinExistence type="inferred from homology"/>
<accession>Q1H2E4</accession>
<sequence>MTLPGEQHLHKIQFYATTAYSCGYLADKPAQSLIATPHHLIDAHAYSGLIQLGFRRSGKFAYRPHCETCHACIPVRLPVAEFQPSRSQRRAWKQHRNLSVALIELAFSEEHFALYSAYQAARHEGSSEDPETVEQYRNFLVQSNVESLMVEFRENGVLKMVSVVDIVRDGISAVYTFYDTADKHASYGTYNILWLLDWCGSLNLPYLYLGYWIKESRKMAYKQNFLPQEGLIDGEWRPIHTERYAQPK</sequence>
<keyword id="KW-0012">Acyltransferase</keyword>
<keyword id="KW-0963">Cytoplasm</keyword>
<keyword id="KW-1185">Reference proteome</keyword>
<keyword id="KW-0808">Transferase</keyword>
<organism>
    <name type="scientific">Methylobacillus flagellatus (strain ATCC 51484 / DSM 6875 / VKM B-1610 / KT)</name>
    <dbReference type="NCBI Taxonomy" id="265072"/>
    <lineage>
        <taxon>Bacteria</taxon>
        <taxon>Pseudomonadati</taxon>
        <taxon>Pseudomonadota</taxon>
        <taxon>Betaproteobacteria</taxon>
        <taxon>Nitrosomonadales</taxon>
        <taxon>Methylophilaceae</taxon>
        <taxon>Methylobacillus</taxon>
    </lineage>
</organism>
<dbReference type="EC" id="2.3.2.29" evidence="1"/>
<dbReference type="EMBL" id="CP000284">
    <property type="protein sequence ID" value="ABE49343.1"/>
    <property type="molecule type" value="Genomic_DNA"/>
</dbReference>
<dbReference type="EMBL" id="CP000284">
    <property type="protein sequence ID" value="ABE49199.1"/>
    <property type="molecule type" value="Genomic_DNA"/>
</dbReference>
<dbReference type="RefSeq" id="WP_011479296.1">
    <property type="nucleotide sequence ID" value="NC_007947.1"/>
</dbReference>
<dbReference type="SMR" id="Q1H2E4"/>
<dbReference type="STRING" id="265072.Mfla_0931"/>
<dbReference type="KEGG" id="mfa:Mfla_0931"/>
<dbReference type="KEGG" id="mfa:Mfla_1075"/>
<dbReference type="eggNOG" id="COG2935">
    <property type="taxonomic scope" value="Bacteria"/>
</dbReference>
<dbReference type="HOGENOM" id="CLU_077607_0_0_4"/>
<dbReference type="OrthoDB" id="9782022at2"/>
<dbReference type="Proteomes" id="UP000002440">
    <property type="component" value="Chromosome"/>
</dbReference>
<dbReference type="GO" id="GO:0005737">
    <property type="term" value="C:cytoplasm"/>
    <property type="evidence" value="ECO:0007669"/>
    <property type="project" value="UniProtKB-SubCell"/>
</dbReference>
<dbReference type="GO" id="GO:0004057">
    <property type="term" value="F:arginyl-tRNA--protein transferase activity"/>
    <property type="evidence" value="ECO:0007669"/>
    <property type="project" value="InterPro"/>
</dbReference>
<dbReference type="GO" id="GO:0008914">
    <property type="term" value="F:leucyl-tRNA--protein transferase activity"/>
    <property type="evidence" value="ECO:0007669"/>
    <property type="project" value="UniProtKB-UniRule"/>
</dbReference>
<dbReference type="GO" id="GO:0071596">
    <property type="term" value="P:ubiquitin-dependent protein catabolic process via the N-end rule pathway"/>
    <property type="evidence" value="ECO:0007669"/>
    <property type="project" value="InterPro"/>
</dbReference>
<dbReference type="HAMAP" id="MF_00689">
    <property type="entry name" value="Bpt"/>
    <property type="match status" value="1"/>
</dbReference>
<dbReference type="InterPro" id="IPR016181">
    <property type="entry name" value="Acyl_CoA_acyltransferase"/>
</dbReference>
<dbReference type="InterPro" id="IPR017138">
    <property type="entry name" value="Asp_Glu_LeuTrfase"/>
</dbReference>
<dbReference type="InterPro" id="IPR030700">
    <property type="entry name" value="N-end_Aminoacyl_Trfase"/>
</dbReference>
<dbReference type="InterPro" id="IPR007472">
    <property type="entry name" value="N-end_Aminoacyl_Trfase_C"/>
</dbReference>
<dbReference type="InterPro" id="IPR007471">
    <property type="entry name" value="N-end_Aminoacyl_Trfase_N"/>
</dbReference>
<dbReference type="NCBIfam" id="NF002341">
    <property type="entry name" value="PRK01305.1-1"/>
    <property type="match status" value="1"/>
</dbReference>
<dbReference type="NCBIfam" id="NF002342">
    <property type="entry name" value="PRK01305.1-3"/>
    <property type="match status" value="1"/>
</dbReference>
<dbReference type="NCBIfam" id="NF002346">
    <property type="entry name" value="PRK01305.2-3"/>
    <property type="match status" value="1"/>
</dbReference>
<dbReference type="PANTHER" id="PTHR21367">
    <property type="entry name" value="ARGININE-TRNA-PROTEIN TRANSFERASE 1"/>
    <property type="match status" value="1"/>
</dbReference>
<dbReference type="PANTHER" id="PTHR21367:SF1">
    <property type="entry name" value="ARGINYL-TRNA--PROTEIN TRANSFERASE 1"/>
    <property type="match status" value="1"/>
</dbReference>
<dbReference type="Pfam" id="PF04377">
    <property type="entry name" value="ATE_C"/>
    <property type="match status" value="1"/>
</dbReference>
<dbReference type="Pfam" id="PF04376">
    <property type="entry name" value="ATE_N"/>
    <property type="match status" value="1"/>
</dbReference>
<dbReference type="PIRSF" id="PIRSF037208">
    <property type="entry name" value="ATE_pro_prd"/>
    <property type="match status" value="1"/>
</dbReference>
<dbReference type="SUPFAM" id="SSF55729">
    <property type="entry name" value="Acyl-CoA N-acyltransferases (Nat)"/>
    <property type="match status" value="1"/>
</dbReference>
<reference key="1">
    <citation type="submission" date="2006-03" db="EMBL/GenBank/DDBJ databases">
        <title>Complete sequence of Methylobacillus flagellatus KT.</title>
        <authorList>
            <consortium name="US DOE Joint Genome Institute"/>
            <person name="Copeland A."/>
            <person name="Lucas S."/>
            <person name="Lapidus A."/>
            <person name="Barry K."/>
            <person name="Detter J.C."/>
            <person name="Glavina del Rio T."/>
            <person name="Hammon N."/>
            <person name="Israni S."/>
            <person name="Dalin E."/>
            <person name="Tice H."/>
            <person name="Pitluck S."/>
            <person name="Brettin T."/>
            <person name="Bruce D."/>
            <person name="Han C."/>
            <person name="Tapia R."/>
            <person name="Saunders E."/>
            <person name="Gilna P."/>
            <person name="Schmutz J."/>
            <person name="Larimer F."/>
            <person name="Land M."/>
            <person name="Kyrpides N."/>
            <person name="Anderson I."/>
            <person name="Richardson P."/>
        </authorList>
    </citation>
    <scope>NUCLEOTIDE SEQUENCE [LARGE SCALE GENOMIC DNA]</scope>
    <source>
        <strain>ATCC 51484 / DSM 6875 / VKM B-1610 / KT</strain>
    </source>
</reference>
<comment type="function">
    <text evidence="1">Functions in the N-end rule pathway of protein degradation where it conjugates Leu from its aminoacyl-tRNA to the N-termini of proteins containing an N-terminal aspartate or glutamate.</text>
</comment>
<comment type="catalytic activity">
    <reaction evidence="1">
        <text>N-terminal L-glutamyl-[protein] + L-leucyl-tRNA(Leu) = N-terminal L-leucyl-L-glutamyl-[protein] + tRNA(Leu) + H(+)</text>
        <dbReference type="Rhea" id="RHEA:50412"/>
        <dbReference type="Rhea" id="RHEA-COMP:9613"/>
        <dbReference type="Rhea" id="RHEA-COMP:9622"/>
        <dbReference type="Rhea" id="RHEA-COMP:12664"/>
        <dbReference type="Rhea" id="RHEA-COMP:12668"/>
        <dbReference type="ChEBI" id="CHEBI:15378"/>
        <dbReference type="ChEBI" id="CHEBI:64721"/>
        <dbReference type="ChEBI" id="CHEBI:78442"/>
        <dbReference type="ChEBI" id="CHEBI:78494"/>
        <dbReference type="ChEBI" id="CHEBI:133041"/>
        <dbReference type="EC" id="2.3.2.29"/>
    </reaction>
</comment>
<comment type="catalytic activity">
    <reaction evidence="1">
        <text>N-terminal L-aspartyl-[protein] + L-leucyl-tRNA(Leu) = N-terminal L-leucyl-L-aspartyl-[protein] + tRNA(Leu) + H(+)</text>
        <dbReference type="Rhea" id="RHEA:50420"/>
        <dbReference type="Rhea" id="RHEA-COMP:9613"/>
        <dbReference type="Rhea" id="RHEA-COMP:9622"/>
        <dbReference type="Rhea" id="RHEA-COMP:12669"/>
        <dbReference type="Rhea" id="RHEA-COMP:12674"/>
        <dbReference type="ChEBI" id="CHEBI:15378"/>
        <dbReference type="ChEBI" id="CHEBI:64720"/>
        <dbReference type="ChEBI" id="CHEBI:78442"/>
        <dbReference type="ChEBI" id="CHEBI:78494"/>
        <dbReference type="ChEBI" id="CHEBI:133042"/>
        <dbReference type="EC" id="2.3.2.29"/>
    </reaction>
</comment>
<comment type="subcellular location">
    <subcellularLocation>
        <location evidence="1">Cytoplasm</location>
    </subcellularLocation>
</comment>
<comment type="similarity">
    <text evidence="1">Belongs to the R-transferase family. Bpt subfamily.</text>
</comment>